<name>ATPD_SYNAS</name>
<feature type="chain" id="PRO_0000382156" description="ATP synthase subunit delta">
    <location>
        <begin position="1"/>
        <end position="181"/>
    </location>
</feature>
<sequence length="181" mass="20456">MINSGIAKRYARAFFDIAGEDKLYEKYYEELSGFARIVQGDRNLKEFLANPVFNQAEKKAVVEAIIQKIRMSDMTTNFLKLLVDKKRIGMLAEIADYYRVLMDEVLKRVRVSVKTAFPLPADVTSDIKQGLEQMTGKQTEIVVEEDRSLLGGIVIRVGDTLYDGSIKTQLSNIRNLLGEAV</sequence>
<evidence type="ECO:0000255" key="1">
    <source>
        <dbReference type="HAMAP-Rule" id="MF_01416"/>
    </source>
</evidence>
<comment type="function">
    <text evidence="1">F(1)F(0) ATP synthase produces ATP from ADP in the presence of a proton or sodium gradient. F-type ATPases consist of two structural domains, F(1) containing the extramembraneous catalytic core and F(0) containing the membrane proton channel, linked together by a central stalk and a peripheral stalk. During catalysis, ATP synthesis in the catalytic domain of F(1) is coupled via a rotary mechanism of the central stalk subunits to proton translocation.</text>
</comment>
<comment type="function">
    <text evidence="1">This protein is part of the stalk that links CF(0) to CF(1). It either transmits conformational changes from CF(0) to CF(1) or is implicated in proton conduction.</text>
</comment>
<comment type="subunit">
    <text evidence="1">F-type ATPases have 2 components, F(1) - the catalytic core - and F(0) - the membrane proton channel. F(1) has five subunits: alpha(3), beta(3), gamma(1), delta(1), epsilon(1). F(0) has three main subunits: a(1), b(2) and c(10-14). The alpha and beta chains form an alternating ring which encloses part of the gamma chain. F(1) is attached to F(0) by a central stalk formed by the gamma and epsilon chains, while a peripheral stalk is formed by the delta and b chains.</text>
</comment>
<comment type="subcellular location">
    <subcellularLocation>
        <location evidence="1">Cell inner membrane</location>
        <topology evidence="1">Peripheral membrane protein</topology>
    </subcellularLocation>
</comment>
<comment type="similarity">
    <text evidence="1">Belongs to the ATPase delta chain family.</text>
</comment>
<proteinExistence type="inferred from homology"/>
<dbReference type="EMBL" id="CP000252">
    <property type="protein sequence ID" value="ABC76508.1"/>
    <property type="molecule type" value="Genomic_DNA"/>
</dbReference>
<dbReference type="RefSeq" id="WP_011416542.1">
    <property type="nucleotide sequence ID" value="NC_007759.1"/>
</dbReference>
<dbReference type="SMR" id="Q2LQZ8"/>
<dbReference type="FunCoup" id="Q2LQZ8">
    <property type="interactions" value="320"/>
</dbReference>
<dbReference type="STRING" id="56780.SYN_00547"/>
<dbReference type="KEGG" id="sat:SYN_00547"/>
<dbReference type="eggNOG" id="COG0712">
    <property type="taxonomic scope" value="Bacteria"/>
</dbReference>
<dbReference type="HOGENOM" id="CLU_085114_1_1_7"/>
<dbReference type="InParanoid" id="Q2LQZ8"/>
<dbReference type="OrthoDB" id="9802471at2"/>
<dbReference type="Proteomes" id="UP000001933">
    <property type="component" value="Chromosome"/>
</dbReference>
<dbReference type="GO" id="GO:0005886">
    <property type="term" value="C:plasma membrane"/>
    <property type="evidence" value="ECO:0007669"/>
    <property type="project" value="UniProtKB-SubCell"/>
</dbReference>
<dbReference type="GO" id="GO:0045259">
    <property type="term" value="C:proton-transporting ATP synthase complex"/>
    <property type="evidence" value="ECO:0007669"/>
    <property type="project" value="UniProtKB-KW"/>
</dbReference>
<dbReference type="GO" id="GO:0046933">
    <property type="term" value="F:proton-transporting ATP synthase activity, rotational mechanism"/>
    <property type="evidence" value="ECO:0007669"/>
    <property type="project" value="UniProtKB-UniRule"/>
</dbReference>
<dbReference type="Gene3D" id="1.10.520.20">
    <property type="entry name" value="N-terminal domain of the delta subunit of the F1F0-ATP synthase"/>
    <property type="match status" value="1"/>
</dbReference>
<dbReference type="HAMAP" id="MF_01416">
    <property type="entry name" value="ATP_synth_delta_bact"/>
    <property type="match status" value="1"/>
</dbReference>
<dbReference type="InterPro" id="IPR026015">
    <property type="entry name" value="ATP_synth_OSCP/delta_N_sf"/>
</dbReference>
<dbReference type="InterPro" id="IPR000711">
    <property type="entry name" value="ATPase_OSCP/dsu"/>
</dbReference>
<dbReference type="NCBIfam" id="TIGR01145">
    <property type="entry name" value="ATP_synt_delta"/>
    <property type="match status" value="1"/>
</dbReference>
<dbReference type="NCBIfam" id="NF004402">
    <property type="entry name" value="PRK05758.2-2"/>
    <property type="match status" value="1"/>
</dbReference>
<dbReference type="PANTHER" id="PTHR11910">
    <property type="entry name" value="ATP SYNTHASE DELTA CHAIN"/>
    <property type="match status" value="1"/>
</dbReference>
<dbReference type="Pfam" id="PF00213">
    <property type="entry name" value="OSCP"/>
    <property type="match status" value="1"/>
</dbReference>
<dbReference type="PRINTS" id="PR00125">
    <property type="entry name" value="ATPASEDELTA"/>
</dbReference>
<dbReference type="SUPFAM" id="SSF47928">
    <property type="entry name" value="N-terminal domain of the delta subunit of the F1F0-ATP synthase"/>
    <property type="match status" value="1"/>
</dbReference>
<accession>Q2LQZ8</accession>
<protein>
    <recommendedName>
        <fullName evidence="1">ATP synthase subunit delta</fullName>
    </recommendedName>
    <alternativeName>
        <fullName evidence="1">ATP synthase F(1) sector subunit delta</fullName>
    </alternativeName>
    <alternativeName>
        <fullName evidence="1">F-type ATPase subunit delta</fullName>
        <shortName evidence="1">F-ATPase subunit delta</shortName>
    </alternativeName>
</protein>
<reference key="1">
    <citation type="journal article" date="2007" name="Proc. Natl. Acad. Sci. U.S.A.">
        <title>The genome of Syntrophus aciditrophicus: life at the thermodynamic limit of microbial growth.</title>
        <authorList>
            <person name="McInerney M.J."/>
            <person name="Rohlin L."/>
            <person name="Mouttaki H."/>
            <person name="Kim U."/>
            <person name="Krupp R.S."/>
            <person name="Rios-Hernandez L."/>
            <person name="Sieber J."/>
            <person name="Struchtemeyer C.G."/>
            <person name="Bhattacharyya A."/>
            <person name="Campbell J.W."/>
            <person name="Gunsalus R.P."/>
        </authorList>
    </citation>
    <scope>NUCLEOTIDE SEQUENCE [LARGE SCALE GENOMIC DNA]</scope>
    <source>
        <strain>SB</strain>
    </source>
</reference>
<keyword id="KW-0066">ATP synthesis</keyword>
<keyword id="KW-0997">Cell inner membrane</keyword>
<keyword id="KW-1003">Cell membrane</keyword>
<keyword id="KW-0139">CF(1)</keyword>
<keyword id="KW-0375">Hydrogen ion transport</keyword>
<keyword id="KW-0406">Ion transport</keyword>
<keyword id="KW-0472">Membrane</keyword>
<keyword id="KW-1185">Reference proteome</keyword>
<keyword id="KW-0813">Transport</keyword>
<gene>
    <name evidence="1" type="primary">atpH</name>
    <name type="ordered locus">SYNAS_06290</name>
    <name type="ORF">SYN_00547</name>
</gene>
<organism>
    <name type="scientific">Syntrophus aciditrophicus (strain SB)</name>
    <dbReference type="NCBI Taxonomy" id="56780"/>
    <lineage>
        <taxon>Bacteria</taxon>
        <taxon>Pseudomonadati</taxon>
        <taxon>Thermodesulfobacteriota</taxon>
        <taxon>Syntrophia</taxon>
        <taxon>Syntrophales</taxon>
        <taxon>Syntrophaceae</taxon>
        <taxon>Syntrophus</taxon>
    </lineage>
</organism>